<keyword id="KW-0072">Autophagy</keyword>
<keyword id="KW-0968">Cytoplasmic vesicle</keyword>
<keyword id="KW-0479">Metal-binding</keyword>
<keyword id="KW-0611">Plant defense</keyword>
<keyword id="KW-0653">Protein transport</keyword>
<keyword id="KW-1185">Reference proteome</keyword>
<keyword id="KW-0813">Transport</keyword>
<keyword id="KW-0926">Vacuole</keyword>
<keyword id="KW-0862">Zinc</keyword>
<keyword id="KW-0863">Zinc-finger</keyword>
<sequence length="862" mass="93977">MAMESSIVIKVKYEETLRRFNACVINEKLDLDIGGLRDKIIQLFNFAHDAELTLTYIDEDGDVVTLVDDEDLQDVMRQDLNPLRISARLNAGERSGRASARSSGNSTPLRSPRVQPPFLNLNSRVSDVLKYIPEPLRESVMKVCSDMTASASSSAPILAELVDAMSEMGLSYYQNQASGSQAVKEAGSCSGISKGNTKSADGGMPNVKIGESSPKKNRPLTALHGEPKPNASNEAVDASVKLVCKSETLEGDRTEDLSSSFKGSKAQTSLVNSLEKDKKFDVRSLDGRTIGYAYVRNSPIPPEKTSDEQPSKGHPVAKPVDLGGSASSSKVKQCNWDSPNADSSGSSINMPYDGFTPSGLVHLNTVNVNDSHNAGSSGSSMKMPYDGFRPAVRHLGPLIPVNACPFSGVPTVNNPIPPQNFSFEVPLKRSHNHSDGTGTIFHKGVRCDGCGVHPITGPRFISKVKENYDLCSICFAEMGNDADYIRMDRPLTYPNPWSFKSLHDLHGRLRPRPPTVPQVIRGFGLKAGRPKLDSRFIQDVNVLDGTIMAPLTRFTKIWRMKNNGNLVWPQGTQLVWIGGDKLSDRFSVELEITTAGLAVDQELDVAVDFTAPEHPGRYISYWRLASASGQKFGQRVWVLIQVDALLSVPKKGLVHEAFQGLNLNLPPAGSGVSGPDIINVNSEPQNVLPEPKSSSTMELVDSVAEVNQNKEQEAKFPINDSLLVGFGDKSSSPSASGSPISYPVIDLTEKPSADSSMQPSAAVAMQAPLQDARGNFEVEMSLLQELEEMGFKQVDLNKEILRKNEYDLEQSVDDLCGVAEWDPILEELKEMGFCDKEMNKKLLKKNNGSIKRVVMDLIAGEQ</sequence>
<name>JOKA2_SOLTU</name>
<comment type="function">
    <text evidence="6 7 10 11">Autophagic substrate that functions as a host autophagy cargo receptor (Probable). Requires ATG8 protein expression to be recognized as an autophagic substrate (Probable). Activates ATG8CL-mediated selective autophagy, and contributes to defense against the fungal pathogen Phytophtora infestans (PubMed:26765567, PubMed:29932422).</text>
</comment>
<comment type="subunit">
    <text evidence="6 7">Interacts (via C-terminal AIM motif) with ATG8CL.</text>
</comment>
<comment type="subcellular location">
    <subcellularLocation>
        <location evidence="7">Vacuole</location>
    </subcellularLocation>
    <subcellularLocation>
        <location evidence="7">Cytoplasmic vesicle</location>
        <location evidence="7">Autophagosome</location>
    </subcellularLocation>
</comment>
<comment type="domain">
    <text evidence="6 7">The ATG8 interacting motif (AIM) is required for the interaction with ATG8CL (PubMed:26765567, PubMed:29932422). The AIM motif is required for JOKA2 function as host autophagy cargo receptor (PubMed:26765567, PubMed:29932422).</text>
</comment>
<evidence type="ECO:0000255" key="1">
    <source>
        <dbReference type="PROSITE-ProRule" id="PRU00212"/>
    </source>
</evidence>
<evidence type="ECO:0000255" key="2">
    <source>
        <dbReference type="PROSITE-ProRule" id="PRU00228"/>
    </source>
</evidence>
<evidence type="ECO:0000255" key="3">
    <source>
        <dbReference type="PROSITE-ProRule" id="PRU01081"/>
    </source>
</evidence>
<evidence type="ECO:0000256" key="4">
    <source>
        <dbReference type="SAM" id="MobiDB-lite"/>
    </source>
</evidence>
<evidence type="ECO:0000269" key="5">
    <source>
    </source>
</evidence>
<evidence type="ECO:0000269" key="6">
    <source>
    </source>
</evidence>
<evidence type="ECO:0000269" key="7">
    <source>
    </source>
</evidence>
<evidence type="ECO:0000303" key="8">
    <source>
    </source>
</evidence>
<evidence type="ECO:0000305" key="9"/>
<evidence type="ECO:0000305" key="10">
    <source>
    </source>
</evidence>
<evidence type="ECO:0000305" key="11">
    <source>
    </source>
</evidence>
<feature type="chain" id="PRO_0000447347" description="Protein JOKA2">
    <location>
        <begin position="1"/>
        <end position="862"/>
    </location>
</feature>
<feature type="domain" description="PB1" evidence="3">
    <location>
        <begin position="6"/>
        <end position="90"/>
    </location>
</feature>
<feature type="domain" description="UBA" evidence="1">
    <location>
        <begin position="811"/>
        <end position="860"/>
    </location>
</feature>
<feature type="zinc finger region" description="ZZ-type; degenerate" evidence="2">
    <location>
        <begin position="442"/>
        <end position="492"/>
    </location>
</feature>
<feature type="region of interest" description="Disordered" evidence="4">
    <location>
        <begin position="92"/>
        <end position="117"/>
    </location>
</feature>
<feature type="region of interest" description="Disordered" evidence="4">
    <location>
        <begin position="194"/>
        <end position="234"/>
    </location>
</feature>
<feature type="region of interest" description="Disordered" evidence="4">
    <location>
        <begin position="295"/>
        <end position="345"/>
    </location>
</feature>
<feature type="short sequence motif" description="ATG8 interacting motif (AIM)" evidence="5">
    <location>
        <begin position="817"/>
        <end position="824"/>
    </location>
</feature>
<feature type="compositionally biased region" description="Low complexity" evidence="4">
    <location>
        <begin position="92"/>
        <end position="106"/>
    </location>
</feature>
<feature type="compositionally biased region" description="Polar residues" evidence="4">
    <location>
        <begin position="325"/>
        <end position="345"/>
    </location>
</feature>
<feature type="binding site" evidence="2">
    <location>
        <position position="447"/>
    </location>
    <ligand>
        <name>Zn(2+)</name>
        <dbReference type="ChEBI" id="CHEBI:29105"/>
    </ligand>
</feature>
<feature type="binding site" evidence="2">
    <location>
        <position position="450"/>
    </location>
    <ligand>
        <name>Zn(2+)</name>
        <dbReference type="ChEBI" id="CHEBI:29105"/>
    </ligand>
</feature>
<feature type="binding site" evidence="2">
    <location>
        <position position="471"/>
    </location>
    <ligand>
        <name>Zn(2+)</name>
        <dbReference type="ChEBI" id="CHEBI:29105"/>
    </ligand>
</feature>
<feature type="binding site" evidence="2">
    <location>
        <position position="474"/>
    </location>
    <ligand>
        <name>Zn(2+)</name>
        <dbReference type="ChEBI" id="CHEBI:29105"/>
    </ligand>
</feature>
<feature type="mutagenesis site" description="Loss of interaction with ATG8CL; when associated with A-824." evidence="6">
    <original>W</original>
    <variation>A</variation>
    <location>
        <position position="821"/>
    </location>
</feature>
<feature type="mutagenesis site" description="Loss of interaction with ATG8CL; when associated with A-821." evidence="6">
    <original>I</original>
    <variation>A</variation>
    <location>
        <position position="824"/>
    </location>
</feature>
<gene>
    <name evidence="8" type="primary">JOKA2</name>
</gene>
<organism>
    <name type="scientific">Solanum tuberosum</name>
    <name type="common">Potato</name>
    <dbReference type="NCBI Taxonomy" id="4113"/>
    <lineage>
        <taxon>Eukaryota</taxon>
        <taxon>Viridiplantae</taxon>
        <taxon>Streptophyta</taxon>
        <taxon>Embryophyta</taxon>
        <taxon>Tracheophyta</taxon>
        <taxon>Spermatophyta</taxon>
        <taxon>Magnoliopsida</taxon>
        <taxon>eudicotyledons</taxon>
        <taxon>Gunneridae</taxon>
        <taxon>Pentapetalae</taxon>
        <taxon>asterids</taxon>
        <taxon>lamiids</taxon>
        <taxon>Solanales</taxon>
        <taxon>Solanaceae</taxon>
        <taxon>Solanoideae</taxon>
        <taxon>Solaneae</taxon>
        <taxon>Solanum</taxon>
    </lineage>
</organism>
<proteinExistence type="evidence at protein level"/>
<dbReference type="SMR" id="M1BJF6"/>
<dbReference type="FunCoup" id="M1BJF6">
    <property type="interactions" value="1156"/>
</dbReference>
<dbReference type="STRING" id="4113.M1BJF6"/>
<dbReference type="PaxDb" id="4113-PGSC0003DMT400046670"/>
<dbReference type="EnsemblPlants" id="PGSC0003DMT400046670">
    <property type="protein sequence ID" value="PGSC0003DMT400046670"/>
    <property type="gene ID" value="PGSC0003DMG400018122"/>
</dbReference>
<dbReference type="Gramene" id="PGSC0003DMT400046670">
    <property type="protein sequence ID" value="PGSC0003DMT400046670"/>
    <property type="gene ID" value="PGSC0003DMG400018122"/>
</dbReference>
<dbReference type="KEGG" id="sot:102582603"/>
<dbReference type="eggNOG" id="KOG4351">
    <property type="taxonomic scope" value="Eukaryota"/>
</dbReference>
<dbReference type="eggNOG" id="KOG4582">
    <property type="taxonomic scope" value="Eukaryota"/>
</dbReference>
<dbReference type="HOGENOM" id="CLU_017180_0_0_1"/>
<dbReference type="InParanoid" id="M1BJF6"/>
<dbReference type="OMA" id="CKIVGFR"/>
<dbReference type="OrthoDB" id="661148at2759"/>
<dbReference type="Proteomes" id="UP000011115">
    <property type="component" value="Unassembled WGS sequence"/>
</dbReference>
<dbReference type="GO" id="GO:0005776">
    <property type="term" value="C:autophagosome"/>
    <property type="evidence" value="ECO:0007669"/>
    <property type="project" value="UniProtKB-SubCell"/>
</dbReference>
<dbReference type="GO" id="GO:0031410">
    <property type="term" value="C:cytoplasmic vesicle"/>
    <property type="evidence" value="ECO:0007669"/>
    <property type="project" value="UniProtKB-KW"/>
</dbReference>
<dbReference type="GO" id="GO:0008270">
    <property type="term" value="F:zinc ion binding"/>
    <property type="evidence" value="ECO:0007669"/>
    <property type="project" value="UniProtKB-KW"/>
</dbReference>
<dbReference type="GO" id="GO:0006914">
    <property type="term" value="P:autophagy"/>
    <property type="evidence" value="ECO:0007669"/>
    <property type="project" value="UniProtKB-KW"/>
</dbReference>
<dbReference type="GO" id="GO:0050832">
    <property type="term" value="P:defense response to fungus"/>
    <property type="evidence" value="ECO:0000314"/>
    <property type="project" value="UniProtKB"/>
</dbReference>
<dbReference type="GO" id="GO:0015031">
    <property type="term" value="P:protein transport"/>
    <property type="evidence" value="ECO:0007669"/>
    <property type="project" value="UniProtKB-KW"/>
</dbReference>
<dbReference type="CDD" id="cd14947">
    <property type="entry name" value="NBR1_like"/>
    <property type="match status" value="1"/>
</dbReference>
<dbReference type="CDD" id="cd06398">
    <property type="entry name" value="PB1_Joka2"/>
    <property type="match status" value="1"/>
</dbReference>
<dbReference type="CDD" id="cd14319">
    <property type="entry name" value="UBA_NBR1"/>
    <property type="match status" value="2"/>
</dbReference>
<dbReference type="FunFam" id="2.60.40.10:FF:000199">
    <property type="entry name" value="next to BRCA1 gene 1 protein-like"/>
    <property type="match status" value="1"/>
</dbReference>
<dbReference type="FunFam" id="1.10.8.10:FF:000085">
    <property type="entry name" value="protein NBR1 homolog"/>
    <property type="match status" value="1"/>
</dbReference>
<dbReference type="Gene3D" id="3.30.60.90">
    <property type="match status" value="1"/>
</dbReference>
<dbReference type="Gene3D" id="1.10.8.10">
    <property type="entry name" value="DNA helicase RuvA subunit, C-terminal domain"/>
    <property type="match status" value="2"/>
</dbReference>
<dbReference type="Gene3D" id="2.60.40.10">
    <property type="entry name" value="Immunoglobulins"/>
    <property type="match status" value="1"/>
</dbReference>
<dbReference type="Gene3D" id="3.10.20.90">
    <property type="entry name" value="Phosphatidylinositol 3-kinase Catalytic Subunit, Chain A, domain 1"/>
    <property type="match status" value="1"/>
</dbReference>
<dbReference type="InterPro" id="IPR013783">
    <property type="entry name" value="Ig-like_fold"/>
</dbReference>
<dbReference type="InterPro" id="IPR032350">
    <property type="entry name" value="N_BRCA1_central"/>
</dbReference>
<dbReference type="InterPro" id="IPR053793">
    <property type="entry name" value="PB1-like"/>
</dbReference>
<dbReference type="InterPro" id="IPR000270">
    <property type="entry name" value="PB1_dom"/>
</dbReference>
<dbReference type="InterPro" id="IPR015940">
    <property type="entry name" value="UBA"/>
</dbReference>
<dbReference type="InterPro" id="IPR009060">
    <property type="entry name" value="UBA-like_sf"/>
</dbReference>
<dbReference type="InterPro" id="IPR056893">
    <property type="entry name" value="UBA_NBR1_C"/>
</dbReference>
<dbReference type="InterPro" id="IPR000433">
    <property type="entry name" value="Znf_ZZ"/>
</dbReference>
<dbReference type="InterPro" id="IPR043145">
    <property type="entry name" value="Znf_ZZ_sf"/>
</dbReference>
<dbReference type="PANTHER" id="PTHR20930">
    <property type="entry name" value="OVARIAN CARCINOMA ANTIGEN CA125-RELATED"/>
    <property type="match status" value="1"/>
</dbReference>
<dbReference type="PANTHER" id="PTHR20930:SF6">
    <property type="entry name" value="PROTEIN JOKA2"/>
    <property type="match status" value="1"/>
</dbReference>
<dbReference type="Pfam" id="PF16158">
    <property type="entry name" value="N_BRCA1_IG"/>
    <property type="match status" value="1"/>
</dbReference>
<dbReference type="Pfam" id="PF00564">
    <property type="entry name" value="PB1"/>
    <property type="match status" value="1"/>
</dbReference>
<dbReference type="Pfam" id="PF24932">
    <property type="entry name" value="UBA_NBR1_C"/>
    <property type="match status" value="2"/>
</dbReference>
<dbReference type="Pfam" id="PF00569">
    <property type="entry name" value="ZZ"/>
    <property type="match status" value="1"/>
</dbReference>
<dbReference type="SMART" id="SM00666">
    <property type="entry name" value="PB1"/>
    <property type="match status" value="1"/>
</dbReference>
<dbReference type="SMART" id="SM00291">
    <property type="entry name" value="ZnF_ZZ"/>
    <property type="match status" value="1"/>
</dbReference>
<dbReference type="SUPFAM" id="SSF54277">
    <property type="entry name" value="CAD &amp; PB1 domains"/>
    <property type="match status" value="1"/>
</dbReference>
<dbReference type="SUPFAM" id="SSF57850">
    <property type="entry name" value="RING/U-box"/>
    <property type="match status" value="1"/>
</dbReference>
<dbReference type="SUPFAM" id="SSF46934">
    <property type="entry name" value="UBA-like"/>
    <property type="match status" value="1"/>
</dbReference>
<dbReference type="PROSITE" id="PS51745">
    <property type="entry name" value="PB1"/>
    <property type="match status" value="1"/>
</dbReference>
<dbReference type="PROSITE" id="PS50030">
    <property type="entry name" value="UBA"/>
    <property type="match status" value="1"/>
</dbReference>
<dbReference type="PROSITE" id="PS50135">
    <property type="entry name" value="ZF_ZZ_2"/>
    <property type="match status" value="1"/>
</dbReference>
<reference key="1">
    <citation type="journal article" date="2011" name="Nature">
        <title>Genome sequence and analysis of the tuber crop potato.</title>
        <authorList>
            <consortium name="The Potato Genome Sequencing Consortium"/>
        </authorList>
    </citation>
    <scope>NUCLEOTIDE SEQUENCE [LARGE SCALE GENOMIC DNA]</scope>
    <source>
        <strain>cv. DM1-3 516 R44</strain>
    </source>
</reference>
<reference key="2">
    <citation type="journal article" date="2016" name="Elife">
        <title>An effector of the Irish potato famine pathogen antagonizes a host autophagy cargo receptor.</title>
        <authorList>
            <person name="Dagdas Y.F."/>
            <person name="Belhaj K."/>
            <person name="Maqbool A."/>
            <person name="Chaparro-Garcia A."/>
            <person name="Pandey P."/>
            <person name="Petre B."/>
            <person name="Tabassum N."/>
            <person name="Cruz-Mireles N."/>
            <person name="Hughes R.K."/>
            <person name="Sklenar J."/>
            <person name="Win J."/>
            <person name="Menke F."/>
            <person name="Findlay K."/>
            <person name="Banfield M.J."/>
            <person name="Kamoun S."/>
            <person name="Bozkurt T.O."/>
        </authorList>
    </citation>
    <scope>FUNCTION</scope>
    <scope>INTERACTION WITH ATG8CL</scope>
    <scope>AIM DOMAIN</scope>
    <scope>MUTAGENESIS OF TRP-821 AND ILE-824</scope>
</reference>
<reference key="3">
    <citation type="journal article" date="2018" name="Elife">
        <title>Host autophagy machinery is diverted to the pathogen interface to mediate focal defense responses against the Irish potato famine pathogen.</title>
        <authorList>
            <person name="Dagdas Y.F."/>
            <person name="Pandey P."/>
            <person name="Tumtas Y."/>
            <person name="Sanguankiattichai N."/>
            <person name="Belhaj K."/>
            <person name="Duggan C."/>
            <person name="Leary A.Y."/>
            <person name="Segretin M.E."/>
            <person name="Contreras M.P."/>
            <person name="Savage Z."/>
            <person name="Khandare V.S."/>
            <person name="Kamoun S."/>
            <person name="Bozkurt T.O."/>
        </authorList>
    </citation>
    <scope>FUNCTION</scope>
    <scope>INTERACTION WITH ATG8CL</scope>
    <scope>SUBCELLULAR LOCATION</scope>
    <scope>AIM DOMAIN</scope>
</reference>
<accession>M1BJF6</accession>
<protein>
    <recommendedName>
        <fullName evidence="8">Protein JOKA2</fullName>
    </recommendedName>
    <alternativeName>
        <fullName evidence="9">Protein NBR1 homolog</fullName>
    </alternativeName>
</protein>